<keyword id="KW-1185">Reference proteome</keyword>
<keyword id="KW-0711">Selenium</keyword>
<feature type="chain" id="PRO_0000168965" description="Putative selenoprotein YdfZ">
    <location>
        <begin position="1"/>
        <end position="67"/>
    </location>
</feature>
<feature type="modified residue" description="S-selanylcysteine" evidence="1">
    <location>
        <position position="52"/>
    </location>
</feature>
<proteinExistence type="inferred from homology"/>
<evidence type="ECO:0000255" key="1"/>
<reference key="1">
    <citation type="journal article" date="2002" name="Proc. Natl. Acad. Sci. U.S.A.">
        <title>Extensive mosaic structure revealed by the complete genome sequence of uropathogenic Escherichia coli.</title>
        <authorList>
            <person name="Welch R.A."/>
            <person name="Burland V."/>
            <person name="Plunkett G. III"/>
            <person name="Redford P."/>
            <person name="Roesch P."/>
            <person name="Rasko D."/>
            <person name="Buckles E.L."/>
            <person name="Liou S.-R."/>
            <person name="Boutin A."/>
            <person name="Hackett J."/>
            <person name="Stroud D."/>
            <person name="Mayhew G.F."/>
            <person name="Rose D.J."/>
            <person name="Zhou S."/>
            <person name="Schwartz D.C."/>
            <person name="Perna N.T."/>
            <person name="Mobley H.L.T."/>
            <person name="Donnenberg M.S."/>
            <person name="Blattner F.R."/>
        </authorList>
    </citation>
    <scope>NUCLEOTIDE SEQUENCE [LARGE SCALE GENOMIC DNA]</scope>
    <source>
        <strain>CFT073 / ATCC 700928 / UPEC</strain>
    </source>
</reference>
<protein>
    <recommendedName>
        <fullName>Putative selenoprotein YdfZ</fullName>
    </recommendedName>
</protein>
<name>YDFZ_ECOL6</name>
<accession>P64464</accession>
<accession>P76153</accession>
<gene>
    <name type="primary">ydfZ</name>
    <name type="ordered locus">c1967</name>
</gene>
<sequence>MTTYDRNRNAITTGSRVMVSGTGHTGKILSIDTEGLTAEQIRRGKTVVVEGCEEKLAPLDLIRLGMN</sequence>
<dbReference type="EMBL" id="AE014075">
    <property type="protein sequence ID" value="AAN80427.1"/>
    <property type="molecule type" value="Genomic_DNA"/>
</dbReference>
<dbReference type="RefSeq" id="WP_000214712.1">
    <property type="nucleotide sequence ID" value="NZ_CP051263.1"/>
</dbReference>
<dbReference type="GeneID" id="93775705"/>
<dbReference type="KEGG" id="ecc:c1967"/>
<dbReference type="eggNOG" id="ENOG503320I">
    <property type="taxonomic scope" value="Bacteria"/>
</dbReference>
<dbReference type="HOGENOM" id="CLU_189992_0_0_6"/>
<dbReference type="BioCyc" id="ECOL199310:C1967-MONOMER"/>
<dbReference type="Proteomes" id="UP000001410">
    <property type="component" value="Chromosome"/>
</dbReference>
<dbReference type="InterPro" id="IPR017704">
    <property type="entry name" value="Se-bd_putative_YdfZ"/>
</dbReference>
<dbReference type="NCBIfam" id="TIGR03318">
    <property type="entry name" value="YdfZ_fam"/>
    <property type="match status" value="1"/>
</dbReference>
<dbReference type="Pfam" id="PF14001">
    <property type="entry name" value="YdfZ"/>
    <property type="match status" value="1"/>
</dbReference>
<organism>
    <name type="scientific">Escherichia coli O6:H1 (strain CFT073 / ATCC 700928 / UPEC)</name>
    <dbReference type="NCBI Taxonomy" id="199310"/>
    <lineage>
        <taxon>Bacteria</taxon>
        <taxon>Pseudomonadati</taxon>
        <taxon>Pseudomonadota</taxon>
        <taxon>Gammaproteobacteria</taxon>
        <taxon>Enterobacterales</taxon>
        <taxon>Enterobacteriaceae</taxon>
        <taxon>Escherichia</taxon>
    </lineage>
</organism>